<protein>
    <recommendedName>
        <fullName evidence="1">Large ribosomal subunit protein uL24</fullName>
    </recommendedName>
    <alternativeName>
        <fullName evidence="2">50S ribosomal protein L24</fullName>
    </alternativeName>
</protein>
<organism>
    <name type="scientific">Caulobacter sp. (strain K31)</name>
    <dbReference type="NCBI Taxonomy" id="366602"/>
    <lineage>
        <taxon>Bacteria</taxon>
        <taxon>Pseudomonadati</taxon>
        <taxon>Pseudomonadota</taxon>
        <taxon>Alphaproteobacteria</taxon>
        <taxon>Caulobacterales</taxon>
        <taxon>Caulobacteraceae</taxon>
        <taxon>Caulobacter</taxon>
    </lineage>
</organism>
<evidence type="ECO:0000255" key="1">
    <source>
        <dbReference type="HAMAP-Rule" id="MF_01326"/>
    </source>
</evidence>
<evidence type="ECO:0000305" key="2"/>
<sequence length="104" mass="10984">MAAKIKKGDRVVVLAGKDKGKQGAVTQVLVKANRVLVQGVNLVQRHTKATQADPQGGIKSKEAALHVSNVAIVDSKGKPTRVGFKIEGDKKVRFAKTTGEVING</sequence>
<gene>
    <name evidence="1" type="primary">rplX</name>
    <name type="ordered locus">Caul_1625</name>
</gene>
<comment type="function">
    <text evidence="1">One of two assembly initiator proteins, it binds directly to the 5'-end of the 23S rRNA, where it nucleates assembly of the 50S subunit.</text>
</comment>
<comment type="function">
    <text evidence="1">One of the proteins that surrounds the polypeptide exit tunnel on the outside of the subunit.</text>
</comment>
<comment type="subunit">
    <text evidence="1">Part of the 50S ribosomal subunit.</text>
</comment>
<comment type="similarity">
    <text evidence="1">Belongs to the universal ribosomal protein uL24 family.</text>
</comment>
<dbReference type="EMBL" id="CP000927">
    <property type="protein sequence ID" value="ABZ70754.1"/>
    <property type="molecule type" value="Genomic_DNA"/>
</dbReference>
<dbReference type="SMR" id="B0T2D3"/>
<dbReference type="STRING" id="366602.Caul_1625"/>
<dbReference type="KEGG" id="cak:Caul_1625"/>
<dbReference type="eggNOG" id="COG0198">
    <property type="taxonomic scope" value="Bacteria"/>
</dbReference>
<dbReference type="HOGENOM" id="CLU_093315_2_2_5"/>
<dbReference type="OrthoDB" id="9807419at2"/>
<dbReference type="GO" id="GO:1990904">
    <property type="term" value="C:ribonucleoprotein complex"/>
    <property type="evidence" value="ECO:0007669"/>
    <property type="project" value="UniProtKB-KW"/>
</dbReference>
<dbReference type="GO" id="GO:0005840">
    <property type="term" value="C:ribosome"/>
    <property type="evidence" value="ECO:0007669"/>
    <property type="project" value="UniProtKB-KW"/>
</dbReference>
<dbReference type="GO" id="GO:0019843">
    <property type="term" value="F:rRNA binding"/>
    <property type="evidence" value="ECO:0007669"/>
    <property type="project" value="UniProtKB-UniRule"/>
</dbReference>
<dbReference type="GO" id="GO:0003735">
    <property type="term" value="F:structural constituent of ribosome"/>
    <property type="evidence" value="ECO:0007669"/>
    <property type="project" value="InterPro"/>
</dbReference>
<dbReference type="GO" id="GO:0006412">
    <property type="term" value="P:translation"/>
    <property type="evidence" value="ECO:0007669"/>
    <property type="project" value="UniProtKB-UniRule"/>
</dbReference>
<dbReference type="CDD" id="cd06089">
    <property type="entry name" value="KOW_RPL26"/>
    <property type="match status" value="1"/>
</dbReference>
<dbReference type="FunFam" id="2.30.30.30:FF:000004">
    <property type="entry name" value="50S ribosomal protein L24"/>
    <property type="match status" value="1"/>
</dbReference>
<dbReference type="Gene3D" id="2.30.30.30">
    <property type="match status" value="1"/>
</dbReference>
<dbReference type="HAMAP" id="MF_01326_B">
    <property type="entry name" value="Ribosomal_uL24_B"/>
    <property type="match status" value="1"/>
</dbReference>
<dbReference type="InterPro" id="IPR005824">
    <property type="entry name" value="KOW"/>
</dbReference>
<dbReference type="InterPro" id="IPR014722">
    <property type="entry name" value="Rib_uL2_dom2"/>
</dbReference>
<dbReference type="InterPro" id="IPR003256">
    <property type="entry name" value="Ribosomal_uL24"/>
</dbReference>
<dbReference type="InterPro" id="IPR005825">
    <property type="entry name" value="Ribosomal_uL24_CS"/>
</dbReference>
<dbReference type="InterPro" id="IPR041988">
    <property type="entry name" value="Ribosomal_uL24_KOW"/>
</dbReference>
<dbReference type="InterPro" id="IPR008991">
    <property type="entry name" value="Translation_prot_SH3-like_sf"/>
</dbReference>
<dbReference type="NCBIfam" id="TIGR01079">
    <property type="entry name" value="rplX_bact"/>
    <property type="match status" value="1"/>
</dbReference>
<dbReference type="PANTHER" id="PTHR12903">
    <property type="entry name" value="MITOCHONDRIAL RIBOSOMAL PROTEIN L24"/>
    <property type="match status" value="1"/>
</dbReference>
<dbReference type="Pfam" id="PF00467">
    <property type="entry name" value="KOW"/>
    <property type="match status" value="1"/>
</dbReference>
<dbReference type="Pfam" id="PF17136">
    <property type="entry name" value="ribosomal_L24"/>
    <property type="match status" value="1"/>
</dbReference>
<dbReference type="SMART" id="SM00739">
    <property type="entry name" value="KOW"/>
    <property type="match status" value="1"/>
</dbReference>
<dbReference type="SUPFAM" id="SSF50104">
    <property type="entry name" value="Translation proteins SH3-like domain"/>
    <property type="match status" value="1"/>
</dbReference>
<dbReference type="PROSITE" id="PS01108">
    <property type="entry name" value="RIBOSOMAL_L24"/>
    <property type="match status" value="1"/>
</dbReference>
<reference key="1">
    <citation type="submission" date="2008-01" db="EMBL/GenBank/DDBJ databases">
        <title>Complete sequence of chromosome of Caulobacter sp. K31.</title>
        <authorList>
            <consortium name="US DOE Joint Genome Institute"/>
            <person name="Copeland A."/>
            <person name="Lucas S."/>
            <person name="Lapidus A."/>
            <person name="Barry K."/>
            <person name="Glavina del Rio T."/>
            <person name="Dalin E."/>
            <person name="Tice H."/>
            <person name="Pitluck S."/>
            <person name="Bruce D."/>
            <person name="Goodwin L."/>
            <person name="Thompson L.S."/>
            <person name="Brettin T."/>
            <person name="Detter J.C."/>
            <person name="Han C."/>
            <person name="Schmutz J."/>
            <person name="Larimer F."/>
            <person name="Land M."/>
            <person name="Hauser L."/>
            <person name="Kyrpides N."/>
            <person name="Kim E."/>
            <person name="Stephens C."/>
            <person name="Richardson P."/>
        </authorList>
    </citation>
    <scope>NUCLEOTIDE SEQUENCE [LARGE SCALE GENOMIC DNA]</scope>
    <source>
        <strain>K31</strain>
    </source>
</reference>
<accession>B0T2D3</accession>
<name>RL24_CAUSK</name>
<proteinExistence type="inferred from homology"/>
<keyword id="KW-0687">Ribonucleoprotein</keyword>
<keyword id="KW-0689">Ribosomal protein</keyword>
<keyword id="KW-0694">RNA-binding</keyword>
<keyword id="KW-0699">rRNA-binding</keyword>
<feature type="chain" id="PRO_1000086474" description="Large ribosomal subunit protein uL24">
    <location>
        <begin position="1"/>
        <end position="104"/>
    </location>
</feature>